<sequence length="331" mass="35019">MATSLQAAATFLQPAKIAASPSRNVHLRSNQTVGKSFGLDSSQARLTCSLHSDLKDFAGKCSDAAKIAGFALATSALVVSGAGAEGAPKRLTYDEIQSKTYMEVKGTGTANQCPTIDGGSETFSFKAGKYTGKKFCFEPTSFTVKADSVSKNAPPDFQNTKLMTRLTYTLDEIEGPFEVGSDGSVKFKEEDGIDYAAVTVQLPGGERVPFLFTVKQLEASGKPESFSGKFLVPSYRGSSFLDPKGRGGSTGYDNAVALPAGGRGDEEELSKENVKNTAASVGEITLKITKSKPETGEVIGVFESLQPSDTDLGAKVPKDVKIQGVWYGQIE</sequence>
<evidence type="ECO:0000250" key="1"/>
<evidence type="ECO:0000269" key="2">
    <source>
    </source>
</evidence>
<evidence type="ECO:0000269" key="3">
    <source>
    </source>
</evidence>
<evidence type="ECO:0000269" key="4">
    <source>
    </source>
</evidence>
<evidence type="ECO:0000269" key="5">
    <source>
    </source>
</evidence>
<evidence type="ECO:0000269" key="6">
    <source>
    </source>
</evidence>
<evidence type="ECO:0000305" key="7"/>
<reference key="1">
    <citation type="submission" date="1999-08" db="EMBL/GenBank/DDBJ databases">
        <title>Sequences and map position of 31 Arabidopsis thaliana cDNAs encoding organellar polypeptides.</title>
        <authorList>
            <person name="Legen J."/>
            <person name="Misera S."/>
            <person name="Herrmann R.G."/>
            <person name="Altschmied L."/>
        </authorList>
    </citation>
    <scope>NUCLEOTIDE SEQUENCE [MRNA]</scope>
    <source>
        <strain>cv. Columbia</strain>
    </source>
</reference>
<reference key="2">
    <citation type="journal article" date="2000" name="Nature">
        <title>Sequence and analysis of chromosome 3 of the plant Arabidopsis thaliana.</title>
        <authorList>
            <person name="Salanoubat M."/>
            <person name="Lemcke K."/>
            <person name="Rieger M."/>
            <person name="Ansorge W."/>
            <person name="Unseld M."/>
            <person name="Fartmann B."/>
            <person name="Valle G."/>
            <person name="Bloecker H."/>
            <person name="Perez-Alonso M."/>
            <person name="Obermaier B."/>
            <person name="Delseny M."/>
            <person name="Boutry M."/>
            <person name="Grivell L.A."/>
            <person name="Mache R."/>
            <person name="Puigdomenech P."/>
            <person name="De Simone V."/>
            <person name="Choisne N."/>
            <person name="Artiguenave F."/>
            <person name="Robert C."/>
            <person name="Brottier P."/>
            <person name="Wincker P."/>
            <person name="Cattolico L."/>
            <person name="Weissenbach J."/>
            <person name="Saurin W."/>
            <person name="Quetier F."/>
            <person name="Schaefer M."/>
            <person name="Mueller-Auer S."/>
            <person name="Gabel C."/>
            <person name="Fuchs M."/>
            <person name="Benes V."/>
            <person name="Wurmbach E."/>
            <person name="Drzonek H."/>
            <person name="Erfle H."/>
            <person name="Jordan N."/>
            <person name="Bangert S."/>
            <person name="Wiedelmann R."/>
            <person name="Kranz H."/>
            <person name="Voss H."/>
            <person name="Holland R."/>
            <person name="Brandt P."/>
            <person name="Nyakatura G."/>
            <person name="Vezzi A."/>
            <person name="D'Angelo M."/>
            <person name="Pallavicini A."/>
            <person name="Toppo S."/>
            <person name="Simionati B."/>
            <person name="Conrad A."/>
            <person name="Hornischer K."/>
            <person name="Kauer G."/>
            <person name="Loehnert T.-H."/>
            <person name="Nordsiek G."/>
            <person name="Reichelt J."/>
            <person name="Scharfe M."/>
            <person name="Schoen O."/>
            <person name="Bargues M."/>
            <person name="Terol J."/>
            <person name="Climent J."/>
            <person name="Navarro P."/>
            <person name="Collado C."/>
            <person name="Perez-Perez A."/>
            <person name="Ottenwaelder B."/>
            <person name="Duchemin D."/>
            <person name="Cooke R."/>
            <person name="Laudie M."/>
            <person name="Berger-Llauro C."/>
            <person name="Purnelle B."/>
            <person name="Masuy D."/>
            <person name="de Haan M."/>
            <person name="Maarse A.C."/>
            <person name="Alcaraz J.-P."/>
            <person name="Cottet A."/>
            <person name="Casacuberta E."/>
            <person name="Monfort A."/>
            <person name="Argiriou A."/>
            <person name="Flores M."/>
            <person name="Liguori R."/>
            <person name="Vitale D."/>
            <person name="Mannhaupt G."/>
            <person name="Haase D."/>
            <person name="Schoof H."/>
            <person name="Rudd S."/>
            <person name="Zaccaria P."/>
            <person name="Mewes H.-W."/>
            <person name="Mayer K.F.X."/>
            <person name="Kaul S."/>
            <person name="Town C.D."/>
            <person name="Koo H.L."/>
            <person name="Tallon L.J."/>
            <person name="Jenkins J."/>
            <person name="Rooney T."/>
            <person name="Rizzo M."/>
            <person name="Walts A."/>
            <person name="Utterback T."/>
            <person name="Fujii C.Y."/>
            <person name="Shea T.P."/>
            <person name="Creasy T.H."/>
            <person name="Haas B."/>
            <person name="Maiti R."/>
            <person name="Wu D."/>
            <person name="Peterson J."/>
            <person name="Van Aken S."/>
            <person name="Pai G."/>
            <person name="Militscher J."/>
            <person name="Sellers P."/>
            <person name="Gill J.E."/>
            <person name="Feldblyum T.V."/>
            <person name="Preuss D."/>
            <person name="Lin X."/>
            <person name="Nierman W.C."/>
            <person name="Salzberg S.L."/>
            <person name="White O."/>
            <person name="Venter J.C."/>
            <person name="Fraser C.M."/>
            <person name="Kaneko T."/>
            <person name="Nakamura Y."/>
            <person name="Sato S."/>
            <person name="Kato T."/>
            <person name="Asamizu E."/>
            <person name="Sasamoto S."/>
            <person name="Kimura T."/>
            <person name="Idesawa K."/>
            <person name="Kawashima K."/>
            <person name="Kishida Y."/>
            <person name="Kiyokawa C."/>
            <person name="Kohara M."/>
            <person name="Matsumoto M."/>
            <person name="Matsuno A."/>
            <person name="Muraki A."/>
            <person name="Nakayama S."/>
            <person name="Nakazaki N."/>
            <person name="Shinpo S."/>
            <person name="Takeuchi C."/>
            <person name="Wada T."/>
            <person name="Watanabe A."/>
            <person name="Yamada M."/>
            <person name="Yasuda M."/>
            <person name="Tabata S."/>
        </authorList>
    </citation>
    <scope>NUCLEOTIDE SEQUENCE [LARGE SCALE GENOMIC DNA]</scope>
    <source>
        <strain>cv. Columbia</strain>
    </source>
</reference>
<reference key="3">
    <citation type="journal article" date="2017" name="Plant J.">
        <title>Araport11: a complete reannotation of the Arabidopsis thaliana reference genome.</title>
        <authorList>
            <person name="Cheng C.Y."/>
            <person name="Krishnakumar V."/>
            <person name="Chan A.P."/>
            <person name="Thibaud-Nissen F."/>
            <person name="Schobel S."/>
            <person name="Town C.D."/>
        </authorList>
    </citation>
    <scope>GENOME REANNOTATION</scope>
    <source>
        <strain>cv. Columbia</strain>
    </source>
</reference>
<reference key="4">
    <citation type="journal article" date="2003" name="Science">
        <title>Empirical analysis of transcriptional activity in the Arabidopsis genome.</title>
        <authorList>
            <person name="Yamada K."/>
            <person name="Lim J."/>
            <person name="Dale J.M."/>
            <person name="Chen H."/>
            <person name="Shinn P."/>
            <person name="Palm C.J."/>
            <person name="Southwick A.M."/>
            <person name="Wu H.C."/>
            <person name="Kim C.J."/>
            <person name="Nguyen M."/>
            <person name="Pham P.K."/>
            <person name="Cheuk R.F."/>
            <person name="Karlin-Newmann G."/>
            <person name="Liu S.X."/>
            <person name="Lam B."/>
            <person name="Sakano H."/>
            <person name="Wu T."/>
            <person name="Yu G."/>
            <person name="Miranda M."/>
            <person name="Quach H.L."/>
            <person name="Tripp M."/>
            <person name="Chang C.H."/>
            <person name="Lee J.M."/>
            <person name="Toriumi M.J."/>
            <person name="Chan M.M."/>
            <person name="Tang C.C."/>
            <person name="Onodera C.S."/>
            <person name="Deng J.M."/>
            <person name="Akiyama K."/>
            <person name="Ansari Y."/>
            <person name="Arakawa T."/>
            <person name="Banh J."/>
            <person name="Banno F."/>
            <person name="Bowser L."/>
            <person name="Brooks S.Y."/>
            <person name="Carninci P."/>
            <person name="Chao Q."/>
            <person name="Choy N."/>
            <person name="Enju A."/>
            <person name="Goldsmith A.D."/>
            <person name="Gurjal M."/>
            <person name="Hansen N.F."/>
            <person name="Hayashizaki Y."/>
            <person name="Johnson-Hopson C."/>
            <person name="Hsuan V.W."/>
            <person name="Iida K."/>
            <person name="Karnes M."/>
            <person name="Khan S."/>
            <person name="Koesema E."/>
            <person name="Ishida J."/>
            <person name="Jiang P.X."/>
            <person name="Jones T."/>
            <person name="Kawai J."/>
            <person name="Kamiya A."/>
            <person name="Meyers C."/>
            <person name="Nakajima M."/>
            <person name="Narusaka M."/>
            <person name="Seki M."/>
            <person name="Sakurai T."/>
            <person name="Satou M."/>
            <person name="Tamse R."/>
            <person name="Vaysberg M."/>
            <person name="Wallender E.K."/>
            <person name="Wong C."/>
            <person name="Yamamura Y."/>
            <person name="Yuan S."/>
            <person name="Shinozaki K."/>
            <person name="Davis R.W."/>
            <person name="Theologis A."/>
            <person name="Ecker J.R."/>
        </authorList>
    </citation>
    <scope>NUCLEOTIDE SEQUENCE [LARGE SCALE MRNA]</scope>
    <source>
        <strain>cv. Columbia</strain>
    </source>
</reference>
<reference key="5">
    <citation type="submission" date="2002-03" db="EMBL/GenBank/DDBJ databases">
        <title>Full-length cDNA from Arabidopsis thaliana.</title>
        <authorList>
            <person name="Brover V.V."/>
            <person name="Troukhan M.E."/>
            <person name="Alexandrov N.A."/>
            <person name="Lu Y.-P."/>
            <person name="Flavell R.B."/>
            <person name="Feldmann K.A."/>
        </authorList>
    </citation>
    <scope>NUCLEOTIDE SEQUENCE [LARGE SCALE MRNA]</scope>
</reference>
<reference key="6">
    <citation type="journal article" date="2002" name="J. Biol. Chem.">
        <title>Proteome map of the chloroplast lumen of Arabidopsis thaliana.</title>
        <authorList>
            <person name="Schubert M."/>
            <person name="Petersson U.A."/>
            <person name="Haas B.J."/>
            <person name="Funk C."/>
            <person name="Schroeder W.P."/>
            <person name="Kieselbach T."/>
        </authorList>
    </citation>
    <scope>PROTEIN SEQUENCE OF 85-92</scope>
    <scope>SUBCELLULAR LOCATION</scope>
</reference>
<reference key="7">
    <citation type="journal article" date="2002" name="Plant Cell">
        <title>Central functions of the lumenal and peripheral thylakoid proteome of Arabidopsis determined by experimentation and genome-wide prediction.</title>
        <authorList>
            <person name="Peltier J.-B."/>
            <person name="Emanuelsson O."/>
            <person name="Kalume D.E."/>
            <person name="Ytterberg J."/>
            <person name="Friso G."/>
            <person name="Rudella A."/>
            <person name="Liberles D.A."/>
            <person name="Soederberg L."/>
            <person name="Roepstorff P."/>
            <person name="von Heijne G."/>
            <person name="van Wijk K.J."/>
        </authorList>
    </citation>
    <scope>PROTEIN SEQUENCE OF N-TERMINUS</scope>
    <scope>IDENTIFICATION BY MASS SPECTROMETRY</scope>
</reference>
<reference key="8">
    <citation type="journal article" date="2005" name="J. Biol. Chem.">
        <title>The manganese-stabilizing protein is required for photosystem II assembly/stability and photoautotrophy in higher plants.</title>
        <authorList>
            <person name="Yi X."/>
            <person name="McChargue M."/>
            <person name="Laborde S."/>
            <person name="Frankel L.K."/>
            <person name="Bricker T.M."/>
        </authorList>
    </citation>
    <scope>FUNCTION</scope>
</reference>
<reference key="9">
    <citation type="journal article" date="2007" name="Plant J.">
        <title>The Arabidopsis PsbO2 protein regulates dephosphorylation and turnover of the photosystem II reaction centre D1 protein.</title>
        <authorList>
            <person name="Lundin B."/>
            <person name="Hansson M."/>
            <person name="Schoefs B."/>
            <person name="Vener A.V."/>
            <person name="Spetea C."/>
        </authorList>
    </citation>
    <scope>FUNCTION</scope>
</reference>
<reference key="10">
    <citation type="journal article" date="2008" name="PLoS ONE">
        <title>Sorting signals, N-terminal modifications and abundance of the chloroplast proteome.</title>
        <authorList>
            <person name="Zybailov B."/>
            <person name="Rutschow H."/>
            <person name="Friso G."/>
            <person name="Rudella A."/>
            <person name="Emanuelsson O."/>
            <person name="Sun Q."/>
            <person name="van Wijk K.J."/>
        </authorList>
    </citation>
    <scope>IDENTIFICATION BY MASS SPECTROMETRY</scope>
    <scope>SUBCELLULAR LOCATION [LARGE SCALE ANALYSIS]</scope>
</reference>
<reference key="11">
    <citation type="journal article" date="2012" name="J. Proteome Res.">
        <title>Identification of phosphoproteins in Arabidopsis thaliana leaves using polyethylene glycol fractionation, immobilized metal-ion affinity chromatography, two-dimensional gel electrophoresis and mass spectrometry.</title>
        <authorList>
            <person name="Aryal U.K."/>
            <person name="Krochko J.E."/>
            <person name="Ross A.R."/>
        </authorList>
    </citation>
    <scope>IDENTIFICATION BY MASS SPECTROMETRY [LARGE SCALE ANALYSIS]</scope>
</reference>
<name>PSBO2_ARATH</name>
<proteinExistence type="evidence at protein level"/>
<protein>
    <recommendedName>
        <fullName>Oxygen-evolving enhancer protein 1-2, chloroplastic</fullName>
        <shortName>OEE1</shortName>
    </recommendedName>
    <alternativeName>
        <fullName>33 kDa subunit of oxygen evolving system of photosystem II</fullName>
    </alternativeName>
    <alternativeName>
        <fullName>33 kDa thylakoid membrane protein</fullName>
    </alternativeName>
    <alternativeName>
        <fullName>Manganese-stabilizing protein 2</fullName>
        <shortName>MSP-2</shortName>
    </alternativeName>
    <alternativeName>
        <fullName>OEC 33 kDa subunit</fullName>
    </alternativeName>
</protein>
<dbReference type="EMBL" id="AJ145957">
    <property type="protein sequence ID" value="CAB53092.1"/>
    <property type="molecule type" value="mRNA"/>
</dbReference>
<dbReference type="EMBL" id="AL049862">
    <property type="protein sequence ID" value="CAB42911.1"/>
    <property type="molecule type" value="Genomic_DNA"/>
</dbReference>
<dbReference type="EMBL" id="CP002686">
    <property type="protein sequence ID" value="AEE78714.1"/>
    <property type="molecule type" value="Genomic_DNA"/>
</dbReference>
<dbReference type="EMBL" id="AY050362">
    <property type="protein sequence ID" value="AAK91379.1"/>
    <property type="molecule type" value="mRNA"/>
</dbReference>
<dbReference type="EMBL" id="AY116934">
    <property type="protein sequence ID" value="AAM51568.1"/>
    <property type="molecule type" value="mRNA"/>
</dbReference>
<dbReference type="EMBL" id="AY088799">
    <property type="protein sequence ID" value="AAM67110.1"/>
    <property type="molecule type" value="mRNA"/>
</dbReference>
<dbReference type="PIR" id="T08403">
    <property type="entry name" value="T08403"/>
</dbReference>
<dbReference type="RefSeq" id="NP_190651.1">
    <property type="nucleotide sequence ID" value="NM_114942.3"/>
</dbReference>
<dbReference type="SMR" id="Q9S841"/>
<dbReference type="BioGRID" id="9564">
    <property type="interactions" value="3"/>
</dbReference>
<dbReference type="FunCoup" id="Q9S841">
    <property type="interactions" value="875"/>
</dbReference>
<dbReference type="IntAct" id="Q9S841">
    <property type="interactions" value="3"/>
</dbReference>
<dbReference type="STRING" id="3702.Q9S841"/>
<dbReference type="TCDB" id="3.E.2.2.3">
    <property type="family name" value="the photosynthetic reaction center (prc) family"/>
</dbReference>
<dbReference type="GlyGen" id="Q9S841">
    <property type="glycosylation" value="1 site"/>
</dbReference>
<dbReference type="iPTMnet" id="Q9S841"/>
<dbReference type="MetOSite" id="Q9S841"/>
<dbReference type="PaxDb" id="3702-AT3G50820.1"/>
<dbReference type="ProteomicsDB" id="225996"/>
<dbReference type="DNASU" id="824246"/>
<dbReference type="EnsemblPlants" id="AT3G50820.1">
    <property type="protein sequence ID" value="AT3G50820.1"/>
    <property type="gene ID" value="AT3G50820"/>
</dbReference>
<dbReference type="GeneID" id="824246"/>
<dbReference type="Gramene" id="AT3G50820.1">
    <property type="protein sequence ID" value="AT3G50820.1"/>
    <property type="gene ID" value="AT3G50820"/>
</dbReference>
<dbReference type="KEGG" id="ath:AT3G50820"/>
<dbReference type="Araport" id="AT3G50820"/>
<dbReference type="TAIR" id="AT3G50820">
    <property type="gene designation" value="PSBO2"/>
</dbReference>
<dbReference type="eggNOG" id="ENOG502QRXA">
    <property type="taxonomic scope" value="Eukaryota"/>
</dbReference>
<dbReference type="HOGENOM" id="CLU_063138_0_0_1"/>
<dbReference type="InParanoid" id="Q9S841"/>
<dbReference type="OMA" id="GKANDCP"/>
<dbReference type="PhylomeDB" id="Q9S841"/>
<dbReference type="BioCyc" id="ARA:AT3G50820-MONOMER"/>
<dbReference type="CD-CODE" id="4299E36E">
    <property type="entry name" value="Nucleolus"/>
</dbReference>
<dbReference type="PRO" id="PR:Q9S841"/>
<dbReference type="Proteomes" id="UP000006548">
    <property type="component" value="Chromosome 3"/>
</dbReference>
<dbReference type="ExpressionAtlas" id="Q9S841">
    <property type="expression patterns" value="baseline and differential"/>
</dbReference>
<dbReference type="GO" id="GO:0009507">
    <property type="term" value="C:chloroplast"/>
    <property type="evidence" value="ECO:0007005"/>
    <property type="project" value="TAIR"/>
</dbReference>
<dbReference type="GO" id="GO:0009570">
    <property type="term" value="C:chloroplast stroma"/>
    <property type="evidence" value="ECO:0007005"/>
    <property type="project" value="TAIR"/>
</dbReference>
<dbReference type="GO" id="GO:0009534">
    <property type="term" value="C:chloroplast thylakoid"/>
    <property type="evidence" value="ECO:0007005"/>
    <property type="project" value="TAIR"/>
</dbReference>
<dbReference type="GO" id="GO:0009535">
    <property type="term" value="C:chloroplast thylakoid membrane"/>
    <property type="evidence" value="ECO:0007005"/>
    <property type="project" value="TAIR"/>
</dbReference>
<dbReference type="GO" id="GO:0005829">
    <property type="term" value="C:cytosol"/>
    <property type="evidence" value="ECO:0007005"/>
    <property type="project" value="TAIR"/>
</dbReference>
<dbReference type="GO" id="GO:0009654">
    <property type="term" value="C:photosystem II oxygen evolving complex"/>
    <property type="evidence" value="ECO:0007669"/>
    <property type="project" value="InterPro"/>
</dbReference>
<dbReference type="GO" id="GO:0010287">
    <property type="term" value="C:plastoglobule"/>
    <property type="evidence" value="ECO:0007005"/>
    <property type="project" value="TAIR"/>
</dbReference>
<dbReference type="GO" id="GO:0009579">
    <property type="term" value="C:thylakoid"/>
    <property type="evidence" value="ECO:0000314"/>
    <property type="project" value="TAIR"/>
</dbReference>
<dbReference type="GO" id="GO:0031977">
    <property type="term" value="C:thylakoid lumen"/>
    <property type="evidence" value="ECO:0007005"/>
    <property type="project" value="TAIR"/>
</dbReference>
<dbReference type="GO" id="GO:0003729">
    <property type="term" value="F:mRNA binding"/>
    <property type="evidence" value="ECO:0000314"/>
    <property type="project" value="TAIR"/>
</dbReference>
<dbReference type="GO" id="GO:0010242">
    <property type="term" value="F:oxygen evolving activity"/>
    <property type="evidence" value="ECO:0007669"/>
    <property type="project" value="InterPro"/>
</dbReference>
<dbReference type="GO" id="GO:0008266">
    <property type="term" value="F:poly(U) RNA binding"/>
    <property type="evidence" value="ECO:0000314"/>
    <property type="project" value="TAIR"/>
</dbReference>
<dbReference type="GO" id="GO:0010205">
    <property type="term" value="P:photoinhibition"/>
    <property type="evidence" value="ECO:0000315"/>
    <property type="project" value="TAIR"/>
</dbReference>
<dbReference type="GO" id="GO:0019684">
    <property type="term" value="P:photosynthesis, light reaction"/>
    <property type="evidence" value="ECO:0000250"/>
    <property type="project" value="TAIR"/>
</dbReference>
<dbReference type="GO" id="GO:0010207">
    <property type="term" value="P:photosystem II assembly"/>
    <property type="evidence" value="ECO:0000315"/>
    <property type="project" value="TAIR"/>
</dbReference>
<dbReference type="GO" id="GO:0042549">
    <property type="term" value="P:photosystem II stabilization"/>
    <property type="evidence" value="ECO:0000315"/>
    <property type="project" value="TAIR"/>
</dbReference>
<dbReference type="FunFam" id="3.30.2050.10:FF:000001">
    <property type="entry name" value="Oxygen-evolving enhancer protein 1, chloroplastic"/>
    <property type="match status" value="1"/>
</dbReference>
<dbReference type="Gene3D" id="3.30.2050.10">
    <property type="entry name" value="photosynthetic oxygen evolving center domain"/>
    <property type="match status" value="1"/>
</dbReference>
<dbReference type="Gene3D" id="2.40.160.30">
    <property type="entry name" value="Photosystem II, cytochrome c-550 precursor"/>
    <property type="match status" value="1"/>
</dbReference>
<dbReference type="InterPro" id="IPR011250">
    <property type="entry name" value="OMP/PagP_b-brl"/>
</dbReference>
<dbReference type="InterPro" id="IPR002628">
    <property type="entry name" value="PsbO"/>
</dbReference>
<dbReference type="PANTHER" id="PTHR34058">
    <property type="entry name" value="OXYGEN-EVOLVING ENHANCER PROTEIN 1-2, CHLOROPLASTIC"/>
    <property type="match status" value="1"/>
</dbReference>
<dbReference type="Pfam" id="PF01716">
    <property type="entry name" value="MSP"/>
    <property type="match status" value="1"/>
</dbReference>
<dbReference type="SUPFAM" id="SSF56925">
    <property type="entry name" value="OMPA-like"/>
    <property type="match status" value="1"/>
</dbReference>
<keyword id="KW-0150">Chloroplast</keyword>
<keyword id="KW-0903">Direct protein sequencing</keyword>
<keyword id="KW-0464">Manganese</keyword>
<keyword id="KW-0472">Membrane</keyword>
<keyword id="KW-0602">Photosynthesis</keyword>
<keyword id="KW-0604">Photosystem II</keyword>
<keyword id="KW-0934">Plastid</keyword>
<keyword id="KW-1185">Reference proteome</keyword>
<keyword id="KW-0793">Thylakoid</keyword>
<keyword id="KW-0809">Transit peptide</keyword>
<accession>Q9S841</accession>
<feature type="transit peptide" description="Chloroplast" evidence="1">
    <location>
        <begin position="1"/>
        <end position="57"/>
    </location>
</feature>
<feature type="transit peptide" description="Thylakoid" evidence="2 3">
    <location>
        <begin position="58"/>
        <end position="84"/>
    </location>
</feature>
<feature type="chain" id="PRO_0000029554" description="Oxygen-evolving enhancer protein 1-2, chloroplastic">
    <location>
        <begin position="85"/>
        <end position="331"/>
    </location>
</feature>
<gene>
    <name type="primary">PSBO2</name>
    <name type="ordered locus">At3g50820</name>
    <name type="ORF">F18B3.100</name>
</gene>
<organism>
    <name type="scientific">Arabidopsis thaliana</name>
    <name type="common">Mouse-ear cress</name>
    <dbReference type="NCBI Taxonomy" id="3702"/>
    <lineage>
        <taxon>Eukaryota</taxon>
        <taxon>Viridiplantae</taxon>
        <taxon>Streptophyta</taxon>
        <taxon>Embryophyta</taxon>
        <taxon>Tracheophyta</taxon>
        <taxon>Spermatophyta</taxon>
        <taxon>Magnoliopsida</taxon>
        <taxon>eudicotyledons</taxon>
        <taxon>Gunneridae</taxon>
        <taxon>Pentapetalae</taxon>
        <taxon>rosids</taxon>
        <taxon>malvids</taxon>
        <taxon>Brassicales</taxon>
        <taxon>Brassicaceae</taxon>
        <taxon>Camelineae</taxon>
        <taxon>Arabidopsis</taxon>
    </lineage>
</organism>
<comment type="function">
    <text evidence="4 5">Stabilizes the manganese cluster which is the primary site of water splitting. Regulates dephosphorylation and turnover of the PSII reaction center D1 protein.</text>
</comment>
<comment type="interaction">
    <interactant intactId="EBI-449424">
        <id>Q9S841</id>
    </interactant>
    <interactant intactId="EBI-368542">
        <id>P0AA25</id>
        <label>trxA</label>
    </interactant>
    <organismsDiffer>true</organismsDiffer>
    <experiments>2</experiments>
</comment>
<comment type="subcellular location">
    <subcellularLocation>
        <location evidence="2 6">Plastid</location>
        <location evidence="2 6">Chloroplast thylakoid membrane</location>
        <topology evidence="2">Peripheral membrane protein</topology>
        <orientation evidence="2">Lumenal side</orientation>
    </subcellularLocation>
    <text>Associated with the photosystem II complex.</text>
</comment>
<comment type="similarity">
    <text evidence="7">Belongs to the PsbO family.</text>
</comment>